<comment type="similarity">
    <text evidence="1">Belongs to the universal ribosomal protein uS9 family.</text>
</comment>
<feature type="chain" id="PRO_1000128129" description="Small ribosomal subunit protein uS9">
    <location>
        <begin position="1"/>
        <end position="130"/>
    </location>
</feature>
<feature type="region of interest" description="Disordered" evidence="2">
    <location>
        <begin position="109"/>
        <end position="130"/>
    </location>
</feature>
<feature type="compositionally biased region" description="Basic residues" evidence="2">
    <location>
        <begin position="111"/>
        <end position="130"/>
    </location>
</feature>
<dbReference type="EMBL" id="CP000930">
    <property type="protein sequence ID" value="ABZ83991.1"/>
    <property type="molecule type" value="Genomic_DNA"/>
</dbReference>
<dbReference type="RefSeq" id="WP_012282507.1">
    <property type="nucleotide sequence ID" value="NC_010337.2"/>
</dbReference>
<dbReference type="SMR" id="B0TC92"/>
<dbReference type="STRING" id="498761.HM1_1414"/>
<dbReference type="KEGG" id="hmo:HM1_1414"/>
<dbReference type="eggNOG" id="COG0103">
    <property type="taxonomic scope" value="Bacteria"/>
</dbReference>
<dbReference type="HOGENOM" id="CLU_046483_2_1_9"/>
<dbReference type="OrthoDB" id="9803965at2"/>
<dbReference type="Proteomes" id="UP000008550">
    <property type="component" value="Chromosome"/>
</dbReference>
<dbReference type="GO" id="GO:0022627">
    <property type="term" value="C:cytosolic small ribosomal subunit"/>
    <property type="evidence" value="ECO:0007669"/>
    <property type="project" value="TreeGrafter"/>
</dbReference>
<dbReference type="GO" id="GO:0003723">
    <property type="term" value="F:RNA binding"/>
    <property type="evidence" value="ECO:0007669"/>
    <property type="project" value="TreeGrafter"/>
</dbReference>
<dbReference type="GO" id="GO:0003735">
    <property type="term" value="F:structural constituent of ribosome"/>
    <property type="evidence" value="ECO:0007669"/>
    <property type="project" value="InterPro"/>
</dbReference>
<dbReference type="GO" id="GO:0006412">
    <property type="term" value="P:translation"/>
    <property type="evidence" value="ECO:0007669"/>
    <property type="project" value="UniProtKB-UniRule"/>
</dbReference>
<dbReference type="FunFam" id="3.30.230.10:FF:000001">
    <property type="entry name" value="30S ribosomal protein S9"/>
    <property type="match status" value="1"/>
</dbReference>
<dbReference type="Gene3D" id="3.30.230.10">
    <property type="match status" value="1"/>
</dbReference>
<dbReference type="HAMAP" id="MF_00532_B">
    <property type="entry name" value="Ribosomal_uS9_B"/>
    <property type="match status" value="1"/>
</dbReference>
<dbReference type="InterPro" id="IPR020568">
    <property type="entry name" value="Ribosomal_Su5_D2-typ_SF"/>
</dbReference>
<dbReference type="InterPro" id="IPR000754">
    <property type="entry name" value="Ribosomal_uS9"/>
</dbReference>
<dbReference type="InterPro" id="IPR023035">
    <property type="entry name" value="Ribosomal_uS9_bac/plastid"/>
</dbReference>
<dbReference type="InterPro" id="IPR020574">
    <property type="entry name" value="Ribosomal_uS9_CS"/>
</dbReference>
<dbReference type="InterPro" id="IPR014721">
    <property type="entry name" value="Ribsml_uS5_D2-typ_fold_subgr"/>
</dbReference>
<dbReference type="NCBIfam" id="NF001099">
    <property type="entry name" value="PRK00132.1"/>
    <property type="match status" value="1"/>
</dbReference>
<dbReference type="PANTHER" id="PTHR21569">
    <property type="entry name" value="RIBOSOMAL PROTEIN S9"/>
    <property type="match status" value="1"/>
</dbReference>
<dbReference type="PANTHER" id="PTHR21569:SF1">
    <property type="entry name" value="SMALL RIBOSOMAL SUBUNIT PROTEIN US9M"/>
    <property type="match status" value="1"/>
</dbReference>
<dbReference type="Pfam" id="PF00380">
    <property type="entry name" value="Ribosomal_S9"/>
    <property type="match status" value="1"/>
</dbReference>
<dbReference type="SUPFAM" id="SSF54211">
    <property type="entry name" value="Ribosomal protein S5 domain 2-like"/>
    <property type="match status" value="1"/>
</dbReference>
<dbReference type="PROSITE" id="PS00360">
    <property type="entry name" value="RIBOSOMAL_S9"/>
    <property type="match status" value="1"/>
</dbReference>
<evidence type="ECO:0000255" key="1">
    <source>
        <dbReference type="HAMAP-Rule" id="MF_00532"/>
    </source>
</evidence>
<evidence type="ECO:0000256" key="2">
    <source>
        <dbReference type="SAM" id="MobiDB-lite"/>
    </source>
</evidence>
<evidence type="ECO:0000305" key="3"/>
<reference key="1">
    <citation type="journal article" date="2008" name="J. Bacteriol.">
        <title>The genome of Heliobacterium modesticaldum, a phototrophic representative of the Firmicutes containing the simplest photosynthetic apparatus.</title>
        <authorList>
            <person name="Sattley W.M."/>
            <person name="Madigan M.T."/>
            <person name="Swingley W.D."/>
            <person name="Cheung P.C."/>
            <person name="Clocksin K.M."/>
            <person name="Conrad A.L."/>
            <person name="Dejesa L.C."/>
            <person name="Honchak B.M."/>
            <person name="Jung D.O."/>
            <person name="Karbach L.E."/>
            <person name="Kurdoglu A."/>
            <person name="Lahiri S."/>
            <person name="Mastrian S.D."/>
            <person name="Page L.E."/>
            <person name="Taylor H.L."/>
            <person name="Wang Z.T."/>
            <person name="Raymond J."/>
            <person name="Chen M."/>
            <person name="Blankenship R.E."/>
            <person name="Touchman J.W."/>
        </authorList>
    </citation>
    <scope>NUCLEOTIDE SEQUENCE [LARGE SCALE GENOMIC DNA]</scope>
    <source>
        <strain>ATCC 51547 / Ice1</strain>
    </source>
</reference>
<proteinExistence type="inferred from homology"/>
<protein>
    <recommendedName>
        <fullName evidence="1">Small ribosomal subunit protein uS9</fullName>
    </recommendedName>
    <alternativeName>
        <fullName evidence="3">30S ribosomal protein S9</fullName>
    </alternativeName>
</protein>
<sequence length="130" mass="14463">MAQVQFLGTGRRKKSVARVRLVPGDGKFLINNRSLMEYFGKKTLEMIVRQPLELTKSEGRFDVLCNVHGGGTSGQAGAIRLGIARALLKADIGLRPVLKRAGFLTRDPRAKERKKYGLKAARRAPQFSKR</sequence>
<gene>
    <name evidence="1" type="primary">rpsI</name>
    <name type="ordered locus">Helmi_13660</name>
    <name type="ORF">HM1_1414</name>
</gene>
<organism>
    <name type="scientific">Heliobacterium modesticaldum (strain ATCC 51547 / Ice1)</name>
    <dbReference type="NCBI Taxonomy" id="498761"/>
    <lineage>
        <taxon>Bacteria</taxon>
        <taxon>Bacillati</taxon>
        <taxon>Bacillota</taxon>
        <taxon>Clostridia</taxon>
        <taxon>Eubacteriales</taxon>
        <taxon>Heliobacteriaceae</taxon>
        <taxon>Heliomicrobium</taxon>
    </lineage>
</organism>
<keyword id="KW-1185">Reference proteome</keyword>
<keyword id="KW-0687">Ribonucleoprotein</keyword>
<keyword id="KW-0689">Ribosomal protein</keyword>
<name>RS9_HELMI</name>
<accession>B0TC92</accession>